<protein>
    <recommendedName>
        <fullName evidence="1">Adenylate kinase</fullName>
        <shortName evidence="1">AK</shortName>
        <ecNumber evidence="1">2.7.4.3</ecNumber>
    </recommendedName>
    <alternativeName>
        <fullName evidence="1">ATP-AMP transphosphorylase</fullName>
    </alternativeName>
    <alternativeName>
        <fullName evidence="1">ATP:AMP phosphotransferase</fullName>
    </alternativeName>
    <alternativeName>
        <fullName evidence="1">Adenylate monophosphate kinase</fullName>
    </alternativeName>
</protein>
<reference key="1">
    <citation type="journal article" date="2007" name="PLoS ONE">
        <title>Paradoxical DNA repair and peroxide resistance gene conservation in Bacillus pumilus SAFR-032.</title>
        <authorList>
            <person name="Gioia J."/>
            <person name="Yerrapragada S."/>
            <person name="Qin X."/>
            <person name="Jiang H."/>
            <person name="Igboeli O.C."/>
            <person name="Muzny D."/>
            <person name="Dugan-Rocha S."/>
            <person name="Ding Y."/>
            <person name="Hawes A."/>
            <person name="Liu W."/>
            <person name="Perez L."/>
            <person name="Kovar C."/>
            <person name="Dinh H."/>
            <person name="Lee S."/>
            <person name="Nazareth L."/>
            <person name="Blyth P."/>
            <person name="Holder M."/>
            <person name="Buhay C."/>
            <person name="Tirumalai M.R."/>
            <person name="Liu Y."/>
            <person name="Dasgupta I."/>
            <person name="Bokhetache L."/>
            <person name="Fujita M."/>
            <person name="Karouia F."/>
            <person name="Eswara Moorthy P."/>
            <person name="Siefert J."/>
            <person name="Uzman A."/>
            <person name="Buzumbo P."/>
            <person name="Verma A."/>
            <person name="Zwiya H."/>
            <person name="McWilliams B.D."/>
            <person name="Olowu A."/>
            <person name="Clinkenbeard K.D."/>
            <person name="Newcombe D."/>
            <person name="Golebiewski L."/>
            <person name="Petrosino J.F."/>
            <person name="Nicholson W.L."/>
            <person name="Fox G.E."/>
            <person name="Venkateswaran K."/>
            <person name="Highlander S.K."/>
            <person name="Weinstock G.M."/>
        </authorList>
    </citation>
    <scope>NUCLEOTIDE SEQUENCE [LARGE SCALE GENOMIC DNA]</scope>
    <source>
        <strain>SAFR-032</strain>
    </source>
</reference>
<comment type="function">
    <text evidence="1">Catalyzes the reversible transfer of the terminal phosphate group between ATP and AMP. Plays an important role in cellular energy homeostasis and in adenine nucleotide metabolism.</text>
</comment>
<comment type="catalytic activity">
    <reaction evidence="1">
        <text>AMP + ATP = 2 ADP</text>
        <dbReference type="Rhea" id="RHEA:12973"/>
        <dbReference type="ChEBI" id="CHEBI:30616"/>
        <dbReference type="ChEBI" id="CHEBI:456215"/>
        <dbReference type="ChEBI" id="CHEBI:456216"/>
        <dbReference type="EC" id="2.7.4.3"/>
    </reaction>
</comment>
<comment type="pathway">
    <text evidence="1">Purine metabolism; AMP biosynthesis via salvage pathway; AMP from ADP: step 1/1.</text>
</comment>
<comment type="subunit">
    <text evidence="1">Monomer.</text>
</comment>
<comment type="subcellular location">
    <subcellularLocation>
        <location evidence="1">Cytoplasm</location>
    </subcellularLocation>
</comment>
<comment type="domain">
    <text evidence="1">Consists of three domains, a large central CORE domain and two small peripheral domains, NMPbind and LID, which undergo movements during catalysis. The LID domain closes over the site of phosphoryl transfer upon ATP binding. Assembling and dissambling the active center during each catalytic cycle provides an effective means to prevent ATP hydrolysis. Some bacteria have evolved a zinc-coordinating structure that stabilizes the LID domain.</text>
</comment>
<comment type="similarity">
    <text evidence="1">Belongs to the adenylate kinase family.</text>
</comment>
<dbReference type="EC" id="2.7.4.3" evidence="1"/>
<dbReference type="EMBL" id="CP000813">
    <property type="protein sequence ID" value="ABV60823.1"/>
    <property type="molecule type" value="Genomic_DNA"/>
</dbReference>
<dbReference type="RefSeq" id="WP_012008711.1">
    <property type="nucleotide sequence ID" value="NZ_VEIS01000020.1"/>
</dbReference>
<dbReference type="SMR" id="A8F9A6"/>
<dbReference type="STRING" id="315750.BPUM_0123"/>
<dbReference type="GeneID" id="5619365"/>
<dbReference type="KEGG" id="bpu:BPUM_0123"/>
<dbReference type="eggNOG" id="COG0563">
    <property type="taxonomic scope" value="Bacteria"/>
</dbReference>
<dbReference type="HOGENOM" id="CLU_032354_1_2_9"/>
<dbReference type="OrthoDB" id="9805030at2"/>
<dbReference type="UniPathway" id="UPA00588">
    <property type="reaction ID" value="UER00649"/>
</dbReference>
<dbReference type="Proteomes" id="UP000001355">
    <property type="component" value="Chromosome"/>
</dbReference>
<dbReference type="GO" id="GO:0005737">
    <property type="term" value="C:cytoplasm"/>
    <property type="evidence" value="ECO:0007669"/>
    <property type="project" value="UniProtKB-SubCell"/>
</dbReference>
<dbReference type="GO" id="GO:0004017">
    <property type="term" value="F:adenylate kinase activity"/>
    <property type="evidence" value="ECO:0007669"/>
    <property type="project" value="UniProtKB-UniRule"/>
</dbReference>
<dbReference type="GO" id="GO:0005524">
    <property type="term" value="F:ATP binding"/>
    <property type="evidence" value="ECO:0007669"/>
    <property type="project" value="UniProtKB-UniRule"/>
</dbReference>
<dbReference type="GO" id="GO:0008270">
    <property type="term" value="F:zinc ion binding"/>
    <property type="evidence" value="ECO:0007669"/>
    <property type="project" value="UniProtKB-UniRule"/>
</dbReference>
<dbReference type="GO" id="GO:0044209">
    <property type="term" value="P:AMP salvage"/>
    <property type="evidence" value="ECO:0007669"/>
    <property type="project" value="UniProtKB-UniRule"/>
</dbReference>
<dbReference type="CDD" id="cd01428">
    <property type="entry name" value="ADK"/>
    <property type="match status" value="1"/>
</dbReference>
<dbReference type="FunFam" id="3.40.50.300:FF:000106">
    <property type="entry name" value="Adenylate kinase mitochondrial"/>
    <property type="match status" value="1"/>
</dbReference>
<dbReference type="Gene3D" id="3.40.50.300">
    <property type="entry name" value="P-loop containing nucleotide triphosphate hydrolases"/>
    <property type="match status" value="1"/>
</dbReference>
<dbReference type="HAMAP" id="MF_00235">
    <property type="entry name" value="Adenylate_kinase_Adk"/>
    <property type="match status" value="1"/>
</dbReference>
<dbReference type="InterPro" id="IPR006259">
    <property type="entry name" value="Adenyl_kin_sub"/>
</dbReference>
<dbReference type="InterPro" id="IPR000850">
    <property type="entry name" value="Adenylat/UMP-CMP_kin"/>
</dbReference>
<dbReference type="InterPro" id="IPR033690">
    <property type="entry name" value="Adenylat_kinase_CS"/>
</dbReference>
<dbReference type="InterPro" id="IPR007862">
    <property type="entry name" value="Adenylate_kinase_lid-dom"/>
</dbReference>
<dbReference type="InterPro" id="IPR027417">
    <property type="entry name" value="P-loop_NTPase"/>
</dbReference>
<dbReference type="NCBIfam" id="TIGR01351">
    <property type="entry name" value="adk"/>
    <property type="match status" value="1"/>
</dbReference>
<dbReference type="NCBIfam" id="NF001380">
    <property type="entry name" value="PRK00279.1-2"/>
    <property type="match status" value="1"/>
</dbReference>
<dbReference type="NCBIfam" id="NF001381">
    <property type="entry name" value="PRK00279.1-3"/>
    <property type="match status" value="1"/>
</dbReference>
<dbReference type="NCBIfam" id="NF011100">
    <property type="entry name" value="PRK14527.1"/>
    <property type="match status" value="1"/>
</dbReference>
<dbReference type="PANTHER" id="PTHR23359">
    <property type="entry name" value="NUCLEOTIDE KINASE"/>
    <property type="match status" value="1"/>
</dbReference>
<dbReference type="Pfam" id="PF00406">
    <property type="entry name" value="ADK"/>
    <property type="match status" value="1"/>
</dbReference>
<dbReference type="Pfam" id="PF05191">
    <property type="entry name" value="ADK_lid"/>
    <property type="match status" value="1"/>
</dbReference>
<dbReference type="PRINTS" id="PR00094">
    <property type="entry name" value="ADENYLTKNASE"/>
</dbReference>
<dbReference type="SUPFAM" id="SSF52540">
    <property type="entry name" value="P-loop containing nucleoside triphosphate hydrolases"/>
    <property type="match status" value="1"/>
</dbReference>
<dbReference type="PROSITE" id="PS00113">
    <property type="entry name" value="ADENYLATE_KINASE"/>
    <property type="match status" value="1"/>
</dbReference>
<organism>
    <name type="scientific">Bacillus pumilus (strain SAFR-032)</name>
    <dbReference type="NCBI Taxonomy" id="315750"/>
    <lineage>
        <taxon>Bacteria</taxon>
        <taxon>Bacillati</taxon>
        <taxon>Bacillota</taxon>
        <taxon>Bacilli</taxon>
        <taxon>Bacillales</taxon>
        <taxon>Bacillaceae</taxon>
        <taxon>Bacillus</taxon>
    </lineage>
</organism>
<sequence length="217" mass="23979">MNLVLMGLPGAGKGTQAERIVDDYGIPHISTGDMFRAAMKEETQLGLEAKSFIDKGELVPDEVTIGIVRERLGKNDCEQGFLLDGFPRTVAQAEALEDILKDLGRTIDYVINIKVDKDALMERLTGRRICKNCGATYHLVFNPPAKENVCDKCGGELYQRADDNAETVSTRLEVNLKQTEPLLNFYSEKGYLANIDGAKHINDVYADIKDLLGGLNK</sequence>
<keyword id="KW-0067">ATP-binding</keyword>
<keyword id="KW-0963">Cytoplasm</keyword>
<keyword id="KW-0418">Kinase</keyword>
<keyword id="KW-0479">Metal-binding</keyword>
<keyword id="KW-0545">Nucleotide biosynthesis</keyword>
<keyword id="KW-0547">Nucleotide-binding</keyword>
<keyword id="KW-0808">Transferase</keyword>
<keyword id="KW-0862">Zinc</keyword>
<gene>
    <name evidence="1" type="primary">adk</name>
    <name type="ordered locus">BPUM_0123</name>
</gene>
<evidence type="ECO:0000255" key="1">
    <source>
        <dbReference type="HAMAP-Rule" id="MF_00235"/>
    </source>
</evidence>
<proteinExistence type="inferred from homology"/>
<accession>A8F9A6</accession>
<name>KAD_BACP2</name>
<feature type="chain" id="PRO_1000058785" description="Adenylate kinase">
    <location>
        <begin position="1"/>
        <end position="217"/>
    </location>
</feature>
<feature type="region of interest" description="NMP" evidence="1">
    <location>
        <begin position="30"/>
        <end position="59"/>
    </location>
</feature>
<feature type="region of interest" description="LID" evidence="1">
    <location>
        <begin position="126"/>
        <end position="163"/>
    </location>
</feature>
<feature type="binding site" evidence="1">
    <location>
        <begin position="10"/>
        <end position="15"/>
    </location>
    <ligand>
        <name>ATP</name>
        <dbReference type="ChEBI" id="CHEBI:30616"/>
    </ligand>
</feature>
<feature type="binding site" evidence="1">
    <location>
        <position position="31"/>
    </location>
    <ligand>
        <name>AMP</name>
        <dbReference type="ChEBI" id="CHEBI:456215"/>
    </ligand>
</feature>
<feature type="binding site" evidence="1">
    <location>
        <position position="36"/>
    </location>
    <ligand>
        <name>AMP</name>
        <dbReference type="ChEBI" id="CHEBI:456215"/>
    </ligand>
</feature>
<feature type="binding site" evidence="1">
    <location>
        <begin position="57"/>
        <end position="59"/>
    </location>
    <ligand>
        <name>AMP</name>
        <dbReference type="ChEBI" id="CHEBI:456215"/>
    </ligand>
</feature>
<feature type="binding site" evidence="1">
    <location>
        <begin position="85"/>
        <end position="88"/>
    </location>
    <ligand>
        <name>AMP</name>
        <dbReference type="ChEBI" id="CHEBI:456215"/>
    </ligand>
</feature>
<feature type="binding site" evidence="1">
    <location>
        <position position="92"/>
    </location>
    <ligand>
        <name>AMP</name>
        <dbReference type="ChEBI" id="CHEBI:456215"/>
    </ligand>
</feature>
<feature type="binding site" evidence="1">
    <location>
        <position position="127"/>
    </location>
    <ligand>
        <name>ATP</name>
        <dbReference type="ChEBI" id="CHEBI:30616"/>
    </ligand>
</feature>
<feature type="binding site" evidence="1">
    <location>
        <position position="130"/>
    </location>
    <ligand>
        <name>Zn(2+)</name>
        <dbReference type="ChEBI" id="CHEBI:29105"/>
        <note>structural</note>
    </ligand>
</feature>
<feature type="binding site" evidence="1">
    <location>
        <position position="133"/>
    </location>
    <ligand>
        <name>Zn(2+)</name>
        <dbReference type="ChEBI" id="CHEBI:29105"/>
        <note>structural</note>
    </ligand>
</feature>
<feature type="binding site" evidence="1">
    <location>
        <begin position="136"/>
        <end position="137"/>
    </location>
    <ligand>
        <name>ATP</name>
        <dbReference type="ChEBI" id="CHEBI:30616"/>
    </ligand>
</feature>
<feature type="binding site" evidence="1">
    <location>
        <position position="150"/>
    </location>
    <ligand>
        <name>Zn(2+)</name>
        <dbReference type="ChEBI" id="CHEBI:29105"/>
        <note>structural</note>
    </ligand>
</feature>
<feature type="binding site" evidence="1">
    <location>
        <position position="153"/>
    </location>
    <ligand>
        <name>Zn(2+)</name>
        <dbReference type="ChEBI" id="CHEBI:29105"/>
        <note>structural</note>
    </ligand>
</feature>
<feature type="binding site" evidence="1">
    <location>
        <position position="160"/>
    </location>
    <ligand>
        <name>AMP</name>
        <dbReference type="ChEBI" id="CHEBI:456215"/>
    </ligand>
</feature>
<feature type="binding site" evidence="1">
    <location>
        <position position="171"/>
    </location>
    <ligand>
        <name>AMP</name>
        <dbReference type="ChEBI" id="CHEBI:456215"/>
    </ligand>
</feature>
<feature type="binding site" evidence="1">
    <location>
        <position position="199"/>
    </location>
    <ligand>
        <name>ATP</name>
        <dbReference type="ChEBI" id="CHEBI:30616"/>
    </ligand>
</feature>